<feature type="chain" id="PRO_0000374363" description="tRNA-2-methylthio-N(6)-dimethylallyladenosine synthase">
    <location>
        <begin position="1"/>
        <end position="449"/>
    </location>
</feature>
<feature type="domain" description="MTTase N-terminal" evidence="1">
    <location>
        <begin position="11"/>
        <end position="127"/>
    </location>
</feature>
<feature type="domain" description="Radical SAM core" evidence="2">
    <location>
        <begin position="150"/>
        <end position="378"/>
    </location>
</feature>
<feature type="domain" description="TRAM" evidence="1">
    <location>
        <begin position="381"/>
        <end position="449"/>
    </location>
</feature>
<feature type="binding site" evidence="1">
    <location>
        <position position="20"/>
    </location>
    <ligand>
        <name>[4Fe-4S] cluster</name>
        <dbReference type="ChEBI" id="CHEBI:49883"/>
        <label>1</label>
    </ligand>
</feature>
<feature type="binding site" evidence="1">
    <location>
        <position position="56"/>
    </location>
    <ligand>
        <name>[4Fe-4S] cluster</name>
        <dbReference type="ChEBI" id="CHEBI:49883"/>
        <label>1</label>
    </ligand>
</feature>
<feature type="binding site" evidence="1">
    <location>
        <position position="90"/>
    </location>
    <ligand>
        <name>[4Fe-4S] cluster</name>
        <dbReference type="ChEBI" id="CHEBI:49883"/>
        <label>1</label>
    </ligand>
</feature>
<feature type="binding site" evidence="1">
    <location>
        <position position="164"/>
    </location>
    <ligand>
        <name>[4Fe-4S] cluster</name>
        <dbReference type="ChEBI" id="CHEBI:49883"/>
        <label>2</label>
        <note>4Fe-4S-S-AdoMet</note>
    </ligand>
</feature>
<feature type="binding site" evidence="1">
    <location>
        <position position="168"/>
    </location>
    <ligand>
        <name>[4Fe-4S] cluster</name>
        <dbReference type="ChEBI" id="CHEBI:49883"/>
        <label>2</label>
        <note>4Fe-4S-S-AdoMet</note>
    </ligand>
</feature>
<feature type="binding site" evidence="1">
    <location>
        <position position="171"/>
    </location>
    <ligand>
        <name>[4Fe-4S] cluster</name>
        <dbReference type="ChEBI" id="CHEBI:49883"/>
        <label>2</label>
        <note>4Fe-4S-S-AdoMet</note>
    </ligand>
</feature>
<sequence length="449" mass="50988">MSVLEQEKKSGKVYIETYGCQMNEYDSGIVSSLMRDAEYSTSSDPENSDIIFLNTCAIRENAHAKIYNRLQSLGYLKKRNPNLVIGVLGCMAQNLGDDLFHQELPLDLVVGPDNYRSLPELIQRIRKGENSISLTRLSKIETYDEIEPRVVNGIQAFVTIMRGCNNFCTFCVVPYTRGRERSRDPKSIVREVQDLVQKGIRQITLLGQNVNSYKEQDTDFAGLIQMLLDETSIERIRFTSPHPKDFPTHLLQLMSENPRFCPNIHLPLQAGNTRVLEEMKRSYSKEEFLDVVKEIRNIVPDVGITTDIIVGFPNETEEEFEDTLAVVREVQFDMAFMFKYSEREGTMAQRKLPDNVPEEVKSARLTKLVDLQTSISHEQNRARIGRVYSILIENISRKSEKQLCGRTPCGRMTVFPLPQETNVSGMIGSTVSVQIESATSATLKGRILA</sequence>
<organism>
    <name type="scientific">Leptospira interrogans serogroup Icterohaemorrhagiae serovar copenhageni (strain Fiocruz L1-130)</name>
    <dbReference type="NCBI Taxonomy" id="267671"/>
    <lineage>
        <taxon>Bacteria</taxon>
        <taxon>Pseudomonadati</taxon>
        <taxon>Spirochaetota</taxon>
        <taxon>Spirochaetia</taxon>
        <taxon>Leptospirales</taxon>
        <taxon>Leptospiraceae</taxon>
        <taxon>Leptospira</taxon>
    </lineage>
</organism>
<comment type="function">
    <text evidence="1">Catalyzes the methylthiolation of N6-(dimethylallyl)adenosine (i(6)A), leading to the formation of 2-methylthio-N6-(dimethylallyl)adenosine (ms(2)i(6)A) at position 37 in tRNAs that read codons beginning with uridine.</text>
</comment>
<comment type="catalytic activity">
    <reaction evidence="1">
        <text>N(6)-dimethylallyladenosine(37) in tRNA + (sulfur carrier)-SH + AH2 + 2 S-adenosyl-L-methionine = 2-methylsulfanyl-N(6)-dimethylallyladenosine(37) in tRNA + (sulfur carrier)-H + 5'-deoxyadenosine + L-methionine + A + S-adenosyl-L-homocysteine + 2 H(+)</text>
        <dbReference type="Rhea" id="RHEA:37067"/>
        <dbReference type="Rhea" id="RHEA-COMP:10375"/>
        <dbReference type="Rhea" id="RHEA-COMP:10376"/>
        <dbReference type="Rhea" id="RHEA-COMP:14737"/>
        <dbReference type="Rhea" id="RHEA-COMP:14739"/>
        <dbReference type="ChEBI" id="CHEBI:13193"/>
        <dbReference type="ChEBI" id="CHEBI:15378"/>
        <dbReference type="ChEBI" id="CHEBI:17319"/>
        <dbReference type="ChEBI" id="CHEBI:17499"/>
        <dbReference type="ChEBI" id="CHEBI:29917"/>
        <dbReference type="ChEBI" id="CHEBI:57844"/>
        <dbReference type="ChEBI" id="CHEBI:57856"/>
        <dbReference type="ChEBI" id="CHEBI:59789"/>
        <dbReference type="ChEBI" id="CHEBI:64428"/>
        <dbReference type="ChEBI" id="CHEBI:74415"/>
        <dbReference type="ChEBI" id="CHEBI:74417"/>
        <dbReference type="EC" id="2.8.4.3"/>
    </reaction>
</comment>
<comment type="cofactor">
    <cofactor evidence="1">
        <name>[4Fe-4S] cluster</name>
        <dbReference type="ChEBI" id="CHEBI:49883"/>
    </cofactor>
    <text evidence="1">Binds 2 [4Fe-4S] clusters. One cluster is coordinated with 3 cysteines and an exchangeable S-adenosyl-L-methionine.</text>
</comment>
<comment type="subunit">
    <text evidence="1">Monomer.</text>
</comment>
<comment type="subcellular location">
    <subcellularLocation>
        <location evidence="1">Cytoplasm</location>
    </subcellularLocation>
</comment>
<comment type="similarity">
    <text evidence="1">Belongs to the methylthiotransferase family. MiaB subfamily.</text>
</comment>
<protein>
    <recommendedName>
        <fullName evidence="1">tRNA-2-methylthio-N(6)-dimethylallyladenosine synthase</fullName>
        <ecNumber evidence="1">2.8.4.3</ecNumber>
    </recommendedName>
    <alternativeName>
        <fullName evidence="1">(Dimethylallyl)adenosine tRNA methylthiotransferase MiaB</fullName>
    </alternativeName>
    <alternativeName>
        <fullName evidence="1">tRNA-i(6)A37 methylthiotransferase</fullName>
    </alternativeName>
</protein>
<accession>Q72PA4</accession>
<evidence type="ECO:0000255" key="1">
    <source>
        <dbReference type="HAMAP-Rule" id="MF_01864"/>
    </source>
</evidence>
<evidence type="ECO:0000255" key="2">
    <source>
        <dbReference type="PROSITE-ProRule" id="PRU01266"/>
    </source>
</evidence>
<proteinExistence type="inferred from homology"/>
<name>MIAB_LEPIC</name>
<dbReference type="EC" id="2.8.4.3" evidence="1"/>
<dbReference type="EMBL" id="AE016823">
    <property type="protein sequence ID" value="AAS71132.1"/>
    <property type="molecule type" value="Genomic_DNA"/>
</dbReference>
<dbReference type="RefSeq" id="WP_000114512.1">
    <property type="nucleotide sequence ID" value="NC_005823.1"/>
</dbReference>
<dbReference type="SMR" id="Q72PA4"/>
<dbReference type="GeneID" id="61142448"/>
<dbReference type="KEGG" id="lic:LIC_12570"/>
<dbReference type="HOGENOM" id="CLU_018697_2_0_12"/>
<dbReference type="Proteomes" id="UP000007037">
    <property type="component" value="Chromosome I"/>
</dbReference>
<dbReference type="GO" id="GO:0005829">
    <property type="term" value="C:cytosol"/>
    <property type="evidence" value="ECO:0007669"/>
    <property type="project" value="TreeGrafter"/>
</dbReference>
<dbReference type="GO" id="GO:0051539">
    <property type="term" value="F:4 iron, 4 sulfur cluster binding"/>
    <property type="evidence" value="ECO:0007669"/>
    <property type="project" value="UniProtKB-UniRule"/>
</dbReference>
<dbReference type="GO" id="GO:0046872">
    <property type="term" value="F:metal ion binding"/>
    <property type="evidence" value="ECO:0007669"/>
    <property type="project" value="UniProtKB-KW"/>
</dbReference>
<dbReference type="GO" id="GO:0035597">
    <property type="term" value="F:N6-isopentenyladenosine methylthiotransferase activity"/>
    <property type="evidence" value="ECO:0007669"/>
    <property type="project" value="TreeGrafter"/>
</dbReference>
<dbReference type="CDD" id="cd01335">
    <property type="entry name" value="Radical_SAM"/>
    <property type="match status" value="1"/>
</dbReference>
<dbReference type="FunFam" id="3.40.50.12160:FF:000012">
    <property type="entry name" value="tRNA-2-methylthio-N(6)-dimethylallyladenosine synthase"/>
    <property type="match status" value="1"/>
</dbReference>
<dbReference type="FunFam" id="3.80.30.20:FF:000009">
    <property type="entry name" value="tRNA-2-methylthio-N(6)-dimethylallyladenosine synthase"/>
    <property type="match status" value="1"/>
</dbReference>
<dbReference type="Gene3D" id="3.40.50.12160">
    <property type="entry name" value="Methylthiotransferase, N-terminal domain"/>
    <property type="match status" value="1"/>
</dbReference>
<dbReference type="Gene3D" id="3.80.30.20">
    <property type="entry name" value="tm_1862 like domain"/>
    <property type="match status" value="1"/>
</dbReference>
<dbReference type="HAMAP" id="MF_01864">
    <property type="entry name" value="tRNA_metthiotr_MiaB"/>
    <property type="match status" value="1"/>
</dbReference>
<dbReference type="InterPro" id="IPR006638">
    <property type="entry name" value="Elp3/MiaA/NifB-like_rSAM"/>
</dbReference>
<dbReference type="InterPro" id="IPR005839">
    <property type="entry name" value="Methylthiotransferase"/>
</dbReference>
<dbReference type="InterPro" id="IPR020612">
    <property type="entry name" value="Methylthiotransferase_CS"/>
</dbReference>
<dbReference type="InterPro" id="IPR013848">
    <property type="entry name" value="Methylthiotransferase_N"/>
</dbReference>
<dbReference type="InterPro" id="IPR038135">
    <property type="entry name" value="Methylthiotransferase_N_sf"/>
</dbReference>
<dbReference type="InterPro" id="IPR006463">
    <property type="entry name" value="MiaB_methiolase"/>
</dbReference>
<dbReference type="InterPro" id="IPR007197">
    <property type="entry name" value="rSAM"/>
</dbReference>
<dbReference type="InterPro" id="IPR023404">
    <property type="entry name" value="rSAM_horseshoe"/>
</dbReference>
<dbReference type="InterPro" id="IPR002792">
    <property type="entry name" value="TRAM_dom"/>
</dbReference>
<dbReference type="NCBIfam" id="TIGR01574">
    <property type="entry name" value="miaB-methiolase"/>
    <property type="match status" value="1"/>
</dbReference>
<dbReference type="NCBIfam" id="TIGR00089">
    <property type="entry name" value="MiaB/RimO family radical SAM methylthiotransferase"/>
    <property type="match status" value="1"/>
</dbReference>
<dbReference type="PANTHER" id="PTHR43020">
    <property type="entry name" value="CDK5 REGULATORY SUBUNIT-ASSOCIATED PROTEIN 1"/>
    <property type="match status" value="1"/>
</dbReference>
<dbReference type="PANTHER" id="PTHR43020:SF2">
    <property type="entry name" value="MITOCHONDRIAL TRNA METHYLTHIOTRANSFERASE CDK5RAP1"/>
    <property type="match status" value="1"/>
</dbReference>
<dbReference type="Pfam" id="PF04055">
    <property type="entry name" value="Radical_SAM"/>
    <property type="match status" value="1"/>
</dbReference>
<dbReference type="Pfam" id="PF01938">
    <property type="entry name" value="TRAM"/>
    <property type="match status" value="1"/>
</dbReference>
<dbReference type="Pfam" id="PF00919">
    <property type="entry name" value="UPF0004"/>
    <property type="match status" value="1"/>
</dbReference>
<dbReference type="SFLD" id="SFLDF00273">
    <property type="entry name" value="(dimethylallyl)adenosine_tRNA"/>
    <property type="match status" value="1"/>
</dbReference>
<dbReference type="SFLD" id="SFLDG01082">
    <property type="entry name" value="B12-binding_domain_containing"/>
    <property type="match status" value="1"/>
</dbReference>
<dbReference type="SFLD" id="SFLDF00413">
    <property type="entry name" value="CDK5RAP1"/>
    <property type="match status" value="1"/>
</dbReference>
<dbReference type="SFLD" id="SFLDS00029">
    <property type="entry name" value="Radical_SAM"/>
    <property type="match status" value="1"/>
</dbReference>
<dbReference type="SMART" id="SM00729">
    <property type="entry name" value="Elp3"/>
    <property type="match status" value="1"/>
</dbReference>
<dbReference type="SUPFAM" id="SSF102114">
    <property type="entry name" value="Radical SAM enzymes"/>
    <property type="match status" value="1"/>
</dbReference>
<dbReference type="PROSITE" id="PS51449">
    <property type="entry name" value="MTTASE_N"/>
    <property type="match status" value="1"/>
</dbReference>
<dbReference type="PROSITE" id="PS01278">
    <property type="entry name" value="MTTASE_RADICAL"/>
    <property type="match status" value="1"/>
</dbReference>
<dbReference type="PROSITE" id="PS51918">
    <property type="entry name" value="RADICAL_SAM"/>
    <property type="match status" value="1"/>
</dbReference>
<dbReference type="PROSITE" id="PS50926">
    <property type="entry name" value="TRAM"/>
    <property type="match status" value="1"/>
</dbReference>
<reference key="1">
    <citation type="journal article" date="2004" name="J. Bacteriol.">
        <title>Comparative genomics of two Leptospira interrogans serovars reveals novel insights into physiology and pathogenesis.</title>
        <authorList>
            <person name="Nascimento A.L.T.O."/>
            <person name="Ko A.I."/>
            <person name="Martins E.A.L."/>
            <person name="Monteiro-Vitorello C.B."/>
            <person name="Ho P.L."/>
            <person name="Haake D.A."/>
            <person name="Verjovski-Almeida S."/>
            <person name="Hartskeerl R.A."/>
            <person name="Marques M.V."/>
            <person name="Oliveira M.C."/>
            <person name="Menck C.F.M."/>
            <person name="Leite L.C.C."/>
            <person name="Carrer H."/>
            <person name="Coutinho L.L."/>
            <person name="Degrave W.M."/>
            <person name="Dellagostin O.A."/>
            <person name="El-Dorry H."/>
            <person name="Ferro E.S."/>
            <person name="Ferro M.I.T."/>
            <person name="Furlan L.R."/>
            <person name="Gamberini M."/>
            <person name="Giglioti E.A."/>
            <person name="Goes-Neto A."/>
            <person name="Goldman G.H."/>
            <person name="Goldman M.H.S."/>
            <person name="Harakava R."/>
            <person name="Jeronimo S.M.B."/>
            <person name="Junqueira-de-Azevedo I.L.M."/>
            <person name="Kimura E.T."/>
            <person name="Kuramae E.E."/>
            <person name="Lemos E.G.M."/>
            <person name="Lemos M.V.F."/>
            <person name="Marino C.L."/>
            <person name="Nunes L.R."/>
            <person name="de Oliveira R.C."/>
            <person name="Pereira G.G."/>
            <person name="Reis M.S."/>
            <person name="Schriefer A."/>
            <person name="Siqueira W.J."/>
            <person name="Sommer P."/>
            <person name="Tsai S.M."/>
            <person name="Simpson A.J.G."/>
            <person name="Ferro J.A."/>
            <person name="Camargo L.E.A."/>
            <person name="Kitajima J.P."/>
            <person name="Setubal J.C."/>
            <person name="Van Sluys M.A."/>
        </authorList>
    </citation>
    <scope>NUCLEOTIDE SEQUENCE [LARGE SCALE GENOMIC DNA]</scope>
    <source>
        <strain>Fiocruz L1-130</strain>
    </source>
</reference>
<gene>
    <name evidence="1" type="primary">miaB</name>
    <name type="ordered locus">LIC_12570</name>
</gene>
<keyword id="KW-0004">4Fe-4S</keyword>
<keyword id="KW-0963">Cytoplasm</keyword>
<keyword id="KW-0408">Iron</keyword>
<keyword id="KW-0411">Iron-sulfur</keyword>
<keyword id="KW-0479">Metal-binding</keyword>
<keyword id="KW-0949">S-adenosyl-L-methionine</keyword>
<keyword id="KW-0808">Transferase</keyword>
<keyword id="KW-0819">tRNA processing</keyword>